<accession>Q8NHV5</accession>
<accession>H3BNM6</accession>
<gene>
    <name evidence="5" type="primary">MOSMO</name>
    <name evidence="1" type="synonym">ATTHOG</name>
    <name evidence="5" type="synonym">C16orf52</name>
</gene>
<proteinExistence type="evidence at transcript level"/>
<feature type="chain" id="PRO_0000271082" description="Modulator of smoothened protein">
    <location>
        <begin position="1"/>
        <end position="167"/>
    </location>
</feature>
<feature type="transmembrane region" description="Helical" evidence="2">
    <location>
        <begin position="7"/>
        <end position="29"/>
    </location>
</feature>
<feature type="transmembrane region" description="Helical" evidence="2">
    <location>
        <begin position="68"/>
        <end position="88"/>
    </location>
</feature>
<feature type="transmembrane region" description="Helical" evidence="2">
    <location>
        <begin position="101"/>
        <end position="121"/>
    </location>
</feature>
<feature type="transmembrane region" description="Helical" evidence="2">
    <location>
        <begin position="139"/>
        <end position="159"/>
    </location>
</feature>
<feature type="glycosylation site" description="N-linked (GlcNAc...) asparagine" evidence="2">
    <location>
        <position position="135"/>
    </location>
</feature>
<feature type="splice variant" id="VSP_054465" description="In isoform 2." evidence="3">
    <original>GAL</original>
    <variation>VSP</variation>
    <location>
        <begin position="36"/>
        <end position="38"/>
    </location>
</feature>
<feature type="splice variant" id="VSP_054466" description="In isoform 2." evidence="3">
    <location>
        <begin position="39"/>
        <end position="167"/>
    </location>
</feature>
<reference key="1">
    <citation type="journal article" date="2004" name="Nature">
        <title>The sequence and analysis of duplication-rich human chromosome 16.</title>
        <authorList>
            <person name="Martin J."/>
            <person name="Han C."/>
            <person name="Gordon L.A."/>
            <person name="Terry A."/>
            <person name="Prabhakar S."/>
            <person name="She X."/>
            <person name="Xie G."/>
            <person name="Hellsten U."/>
            <person name="Chan Y.M."/>
            <person name="Altherr M."/>
            <person name="Couronne O."/>
            <person name="Aerts A."/>
            <person name="Bajorek E."/>
            <person name="Black S."/>
            <person name="Blumer H."/>
            <person name="Branscomb E."/>
            <person name="Brown N.C."/>
            <person name="Bruno W.J."/>
            <person name="Buckingham J.M."/>
            <person name="Callen D.F."/>
            <person name="Campbell C.S."/>
            <person name="Campbell M.L."/>
            <person name="Campbell E.W."/>
            <person name="Caoile C."/>
            <person name="Challacombe J.F."/>
            <person name="Chasteen L.A."/>
            <person name="Chertkov O."/>
            <person name="Chi H.C."/>
            <person name="Christensen M."/>
            <person name="Clark L.M."/>
            <person name="Cohn J.D."/>
            <person name="Denys M."/>
            <person name="Detter J.C."/>
            <person name="Dickson M."/>
            <person name="Dimitrijevic-Bussod M."/>
            <person name="Escobar J."/>
            <person name="Fawcett J.J."/>
            <person name="Flowers D."/>
            <person name="Fotopulos D."/>
            <person name="Glavina T."/>
            <person name="Gomez M."/>
            <person name="Gonzales E."/>
            <person name="Goodstein D."/>
            <person name="Goodwin L.A."/>
            <person name="Grady D.L."/>
            <person name="Grigoriev I."/>
            <person name="Groza M."/>
            <person name="Hammon N."/>
            <person name="Hawkins T."/>
            <person name="Haydu L."/>
            <person name="Hildebrand C.E."/>
            <person name="Huang W."/>
            <person name="Israni S."/>
            <person name="Jett J."/>
            <person name="Jewett P.B."/>
            <person name="Kadner K."/>
            <person name="Kimball H."/>
            <person name="Kobayashi A."/>
            <person name="Krawczyk M.-C."/>
            <person name="Leyba T."/>
            <person name="Longmire J.L."/>
            <person name="Lopez F."/>
            <person name="Lou Y."/>
            <person name="Lowry S."/>
            <person name="Ludeman T."/>
            <person name="Manohar C.F."/>
            <person name="Mark G.A."/>
            <person name="McMurray K.L."/>
            <person name="Meincke L.J."/>
            <person name="Morgan J."/>
            <person name="Moyzis R.K."/>
            <person name="Mundt M.O."/>
            <person name="Munk A.C."/>
            <person name="Nandkeshwar R.D."/>
            <person name="Pitluck S."/>
            <person name="Pollard M."/>
            <person name="Predki P."/>
            <person name="Parson-Quintana B."/>
            <person name="Ramirez L."/>
            <person name="Rash S."/>
            <person name="Retterer J."/>
            <person name="Ricke D.O."/>
            <person name="Robinson D.L."/>
            <person name="Rodriguez A."/>
            <person name="Salamov A."/>
            <person name="Saunders E.H."/>
            <person name="Scott D."/>
            <person name="Shough T."/>
            <person name="Stallings R.L."/>
            <person name="Stalvey M."/>
            <person name="Sutherland R.D."/>
            <person name="Tapia R."/>
            <person name="Tesmer J.G."/>
            <person name="Thayer N."/>
            <person name="Thompson L.S."/>
            <person name="Tice H."/>
            <person name="Torney D.C."/>
            <person name="Tran-Gyamfi M."/>
            <person name="Tsai M."/>
            <person name="Ulanovsky L.E."/>
            <person name="Ustaszewska A."/>
            <person name="Vo N."/>
            <person name="White P.S."/>
            <person name="Williams A.L."/>
            <person name="Wills P.L."/>
            <person name="Wu J.-R."/>
            <person name="Wu K."/>
            <person name="Yang J."/>
            <person name="DeJong P."/>
            <person name="Bruce D."/>
            <person name="Doggett N.A."/>
            <person name="Deaven L."/>
            <person name="Schmutz J."/>
            <person name="Grimwood J."/>
            <person name="Richardson P."/>
            <person name="Rokhsar D.S."/>
            <person name="Eichler E.E."/>
            <person name="Gilna P."/>
            <person name="Lucas S.M."/>
            <person name="Myers R.M."/>
            <person name="Rubin E.M."/>
            <person name="Pennacchio L.A."/>
        </authorList>
    </citation>
    <scope>NUCLEOTIDE SEQUENCE [LARGE SCALE GENOMIC DNA]</scope>
</reference>
<reference key="2">
    <citation type="journal article" date="2004" name="Genome Res.">
        <title>The status, quality, and expansion of the NIH full-length cDNA project: the Mammalian Gene Collection (MGC).</title>
        <authorList>
            <consortium name="The MGC Project Team"/>
        </authorList>
    </citation>
    <scope>NUCLEOTIDE SEQUENCE [LARGE SCALE MRNA] (ISOFORM 2)</scope>
    <source>
        <tissue>Testis</tissue>
    </source>
</reference>
<comment type="function">
    <text evidence="1">Acts as a negative regulator of hedgehog signaling probably by promoting internalization and subsequent degradation of smoothened protein (SMO) present in the ciliary membrane. Plays a role in sonic hedgehog (SHH)-induced spinal neural progenitor cells differentiation.</text>
</comment>
<comment type="subcellular location">
    <subcellularLocation>
        <location>Cell projection</location>
        <location>Cilium membrane</location>
        <topology evidence="1">Multi-pass membrane protein</topology>
    </subcellularLocation>
    <subcellularLocation>
        <location>Cell membrane</location>
        <topology evidence="1">Multi-pass membrane protein</topology>
    </subcellularLocation>
</comment>
<comment type="alternative products">
    <event type="alternative splicing"/>
    <isoform>
        <id>Q8NHV5-1</id>
        <name>1</name>
        <sequence type="displayed"/>
    </isoform>
    <isoform>
        <id>Q8NHV5-3</id>
        <name>2</name>
        <sequence type="described" ref="VSP_054465 VSP_054466"/>
    </isoform>
</comment>
<comment type="miscellaneous">
    <molecule>Isoform 2</molecule>
    <text evidence="4">May be produced at very low levels due to a premature stop codon in the mRNA, leading to nonsense-mediated mRNA decay.</text>
</comment>
<name>MOSMO_HUMAN</name>
<dbReference type="EMBL" id="AC009019">
    <property type="status" value="NOT_ANNOTATED_CDS"/>
    <property type="molecule type" value="Genomic_DNA"/>
</dbReference>
<dbReference type="EMBL" id="AC092119">
    <property type="status" value="NOT_ANNOTATED_CDS"/>
    <property type="molecule type" value="Genomic_DNA"/>
</dbReference>
<dbReference type="EMBL" id="BC027604">
    <property type="status" value="NOT_ANNOTATED_CDS"/>
    <property type="molecule type" value="mRNA"/>
</dbReference>
<dbReference type="EMBL" id="BC053950">
    <property type="status" value="NOT_ANNOTATED_CDS"/>
    <property type="molecule type" value="mRNA"/>
</dbReference>
<dbReference type="CCDS" id="CCDS58431.1">
    <molecule id="Q8NHV5-1"/>
</dbReference>
<dbReference type="RefSeq" id="NP_001158051.1">
    <molecule id="Q8NHV5-1"/>
    <property type="nucleotide sequence ID" value="NM_001164579.2"/>
</dbReference>
<dbReference type="RefSeq" id="XP_006726675.1">
    <property type="nucleotide sequence ID" value="XM_006726612.3"/>
</dbReference>
<dbReference type="SMR" id="Q8NHV5"/>
<dbReference type="FunCoup" id="Q8NHV5">
    <property type="interactions" value="867"/>
</dbReference>
<dbReference type="STRING" id="9606.ENSP00000454926"/>
<dbReference type="GlyCosmos" id="Q8NHV5">
    <property type="glycosylation" value="1 site, No reported glycans"/>
</dbReference>
<dbReference type="GlyGen" id="Q8NHV5">
    <property type="glycosylation" value="1 site"/>
</dbReference>
<dbReference type="iPTMnet" id="Q8NHV5"/>
<dbReference type="PhosphoSitePlus" id="Q8NHV5"/>
<dbReference type="BioMuta" id="C16orf52"/>
<dbReference type="DMDM" id="122063373"/>
<dbReference type="jPOST" id="Q8NHV5"/>
<dbReference type="PaxDb" id="9606-ENSP00000454926"/>
<dbReference type="PeptideAtlas" id="Q8NHV5"/>
<dbReference type="ProteomicsDB" id="41242"/>
<dbReference type="ProteomicsDB" id="73765">
    <molecule id="Q8NHV5-1"/>
</dbReference>
<dbReference type="DNASU" id="730094"/>
<dbReference type="Ensembl" id="ENST00000331057.8">
    <molecule id="Q8NHV5-3"/>
    <property type="protein sequence ID" value="ENSP00000454543.1"/>
    <property type="gene ID" value="ENSG00000185716.12"/>
</dbReference>
<dbReference type="Ensembl" id="ENST00000542527.7">
    <molecule id="Q8NHV5-1"/>
    <property type="protein sequence ID" value="ENSP00000454926.1"/>
    <property type="gene ID" value="ENSG00000185716.12"/>
</dbReference>
<dbReference type="GeneID" id="730094"/>
<dbReference type="KEGG" id="hsa:730094"/>
<dbReference type="MANE-Select" id="ENST00000542527.7">
    <property type="protein sequence ID" value="ENSP00000454926.1"/>
    <property type="RefSeq nucleotide sequence ID" value="NM_001164579.2"/>
    <property type="RefSeq protein sequence ID" value="NP_001158051.1"/>
</dbReference>
<dbReference type="UCSC" id="uc002dkd.3">
    <molecule id="Q8NHV5-1"/>
    <property type="organism name" value="human"/>
</dbReference>
<dbReference type="AGR" id="HGNC:27087"/>
<dbReference type="CTD" id="730094"/>
<dbReference type="DisGeNET" id="730094"/>
<dbReference type="GeneCards" id="MOSMO"/>
<dbReference type="HGNC" id="HGNC:27087">
    <property type="gene designation" value="MOSMO"/>
</dbReference>
<dbReference type="HPA" id="ENSG00000185716">
    <property type="expression patterns" value="Low tissue specificity"/>
</dbReference>
<dbReference type="neXtProt" id="NX_Q8NHV5"/>
<dbReference type="OpenTargets" id="ENSG00000185716"/>
<dbReference type="VEuPathDB" id="HostDB:ENSG00000185716"/>
<dbReference type="eggNOG" id="ENOG502R4TC">
    <property type="taxonomic scope" value="Eukaryota"/>
</dbReference>
<dbReference type="GeneTree" id="ENSGT00390000018266"/>
<dbReference type="HOGENOM" id="CLU_111296_0_0_1"/>
<dbReference type="InParanoid" id="Q8NHV5"/>
<dbReference type="OMA" id="FIFKVCP"/>
<dbReference type="OrthoDB" id="8768722at2759"/>
<dbReference type="PAN-GO" id="Q8NHV5">
    <property type="GO annotations" value="3 GO annotations based on evolutionary models"/>
</dbReference>
<dbReference type="PhylomeDB" id="Q8NHV5"/>
<dbReference type="TreeFam" id="TF324757"/>
<dbReference type="PathwayCommons" id="Q8NHV5"/>
<dbReference type="BioGRID-ORCS" id="730094">
    <property type="hits" value="12 hits in 1146 CRISPR screens"/>
</dbReference>
<dbReference type="ChiTaRS" id="MOSMO">
    <property type="organism name" value="human"/>
</dbReference>
<dbReference type="Pharos" id="Q8NHV5">
    <property type="development level" value="Tdark"/>
</dbReference>
<dbReference type="PRO" id="PR:Q8NHV5"/>
<dbReference type="Proteomes" id="UP000005640">
    <property type="component" value="Chromosome 16"/>
</dbReference>
<dbReference type="RNAct" id="Q8NHV5">
    <property type="molecule type" value="protein"/>
</dbReference>
<dbReference type="Bgee" id="ENSG00000185716">
    <property type="expression patterns" value="Expressed in pancreatic ductal cell and 195 other cell types or tissues"/>
</dbReference>
<dbReference type="ExpressionAtlas" id="Q8NHV5">
    <property type="expression patterns" value="baseline and differential"/>
</dbReference>
<dbReference type="GO" id="GO:0060170">
    <property type="term" value="C:ciliary membrane"/>
    <property type="evidence" value="ECO:0000250"/>
    <property type="project" value="UniProtKB"/>
</dbReference>
<dbReference type="GO" id="GO:0005794">
    <property type="term" value="C:Golgi apparatus"/>
    <property type="evidence" value="ECO:0000250"/>
    <property type="project" value="UniProtKB"/>
</dbReference>
<dbReference type="GO" id="GO:0005886">
    <property type="term" value="C:plasma membrane"/>
    <property type="evidence" value="ECO:0000250"/>
    <property type="project" value="UniProtKB"/>
</dbReference>
<dbReference type="GO" id="GO:0030154">
    <property type="term" value="P:cell differentiation"/>
    <property type="evidence" value="ECO:0007669"/>
    <property type="project" value="UniProtKB-KW"/>
</dbReference>
<dbReference type="GO" id="GO:0030326">
    <property type="term" value="P:embryonic limb morphogenesis"/>
    <property type="evidence" value="ECO:0007669"/>
    <property type="project" value="Ensembl"/>
</dbReference>
<dbReference type="GO" id="GO:0048706">
    <property type="term" value="P:embryonic skeletal system development"/>
    <property type="evidence" value="ECO:0007669"/>
    <property type="project" value="Ensembl"/>
</dbReference>
<dbReference type="GO" id="GO:0010467">
    <property type="term" value="P:gene expression"/>
    <property type="evidence" value="ECO:0007669"/>
    <property type="project" value="Ensembl"/>
</dbReference>
<dbReference type="GO" id="GO:0007507">
    <property type="term" value="P:heart development"/>
    <property type="evidence" value="ECO:0007669"/>
    <property type="project" value="Ensembl"/>
</dbReference>
<dbReference type="GO" id="GO:0001701">
    <property type="term" value="P:in utero embryonic development"/>
    <property type="evidence" value="ECO:0007669"/>
    <property type="project" value="Ensembl"/>
</dbReference>
<dbReference type="GO" id="GO:0060972">
    <property type="term" value="P:left/right pattern formation"/>
    <property type="evidence" value="ECO:0007669"/>
    <property type="project" value="Ensembl"/>
</dbReference>
<dbReference type="GO" id="GO:0030324">
    <property type="term" value="P:lung development"/>
    <property type="evidence" value="ECO:0007669"/>
    <property type="project" value="Ensembl"/>
</dbReference>
<dbReference type="GO" id="GO:0045879">
    <property type="term" value="P:negative regulation of smoothened signaling pathway"/>
    <property type="evidence" value="ECO:0000250"/>
    <property type="project" value="UniProtKB"/>
</dbReference>
<dbReference type="GO" id="GO:0008104">
    <property type="term" value="P:protein localization"/>
    <property type="evidence" value="ECO:0007669"/>
    <property type="project" value="Ensembl"/>
</dbReference>
<dbReference type="GO" id="GO:0045664">
    <property type="term" value="P:regulation of neuron differentiation"/>
    <property type="evidence" value="ECO:0000250"/>
    <property type="project" value="UniProtKB"/>
</dbReference>
<dbReference type="GO" id="GO:0031647">
    <property type="term" value="P:regulation of protein stability"/>
    <property type="evidence" value="ECO:0000250"/>
    <property type="project" value="UniProtKB"/>
</dbReference>
<dbReference type="GO" id="GO:0007224">
    <property type="term" value="P:smoothened signaling pathway"/>
    <property type="evidence" value="ECO:0007669"/>
    <property type="project" value="Ensembl"/>
</dbReference>
<dbReference type="FunFam" id="1.20.140.150:FF:000006">
    <property type="entry name" value="uncharacterized protein C16orf52 homolog"/>
    <property type="match status" value="1"/>
</dbReference>
<dbReference type="Gene3D" id="1.20.140.150">
    <property type="match status" value="1"/>
</dbReference>
<dbReference type="InterPro" id="IPR037663">
    <property type="entry name" value="Mosmo"/>
</dbReference>
<dbReference type="PANTHER" id="PTHR31186">
    <property type="entry name" value="MODULATOR OF SMOOTHENED PROTEIN"/>
    <property type="match status" value="1"/>
</dbReference>
<dbReference type="PANTHER" id="PTHR31186:SF1">
    <property type="entry name" value="MODULATOR OF SMOOTHENED PROTEIN"/>
    <property type="match status" value="1"/>
</dbReference>
<dbReference type="Pfam" id="PF18800">
    <property type="entry name" value="Atthog"/>
    <property type="match status" value="1"/>
</dbReference>
<evidence type="ECO:0000250" key="1">
    <source>
        <dbReference type="UniProtKB" id="Q8C784"/>
    </source>
</evidence>
<evidence type="ECO:0000255" key="2"/>
<evidence type="ECO:0000303" key="3">
    <source>
    </source>
</evidence>
<evidence type="ECO:0000305" key="4"/>
<evidence type="ECO:0000312" key="5">
    <source>
        <dbReference type="HGNC" id="HGNC:27087"/>
    </source>
</evidence>
<keyword id="KW-0025">Alternative splicing</keyword>
<keyword id="KW-1003">Cell membrane</keyword>
<keyword id="KW-0966">Cell projection</keyword>
<keyword id="KW-0221">Differentiation</keyword>
<keyword id="KW-0325">Glycoprotein</keyword>
<keyword id="KW-0472">Membrane</keyword>
<keyword id="KW-1185">Reference proteome</keyword>
<keyword id="KW-0812">Transmembrane</keyword>
<keyword id="KW-1133">Transmembrane helix</keyword>
<sequence length="167" mass="18250">MDKLTIISGCLFLAADIFAIASIANPDWINTGESAGALTVGLVRQCQTIHGRDRTCIPPRLPPEWVTTLFFIIMGIISLTVTCGLLVASHWRREATKYARWIAFTGMILFCMAALIFPIGFYINEVGGQPYKLPNNTVVGSSYVLFVLSIFFTIVGLLFAGKVCLPG</sequence>
<organism>
    <name type="scientific">Homo sapiens</name>
    <name type="common">Human</name>
    <dbReference type="NCBI Taxonomy" id="9606"/>
    <lineage>
        <taxon>Eukaryota</taxon>
        <taxon>Metazoa</taxon>
        <taxon>Chordata</taxon>
        <taxon>Craniata</taxon>
        <taxon>Vertebrata</taxon>
        <taxon>Euteleostomi</taxon>
        <taxon>Mammalia</taxon>
        <taxon>Eutheria</taxon>
        <taxon>Euarchontoglires</taxon>
        <taxon>Primates</taxon>
        <taxon>Haplorrhini</taxon>
        <taxon>Catarrhini</taxon>
        <taxon>Hominidae</taxon>
        <taxon>Homo</taxon>
    </lineage>
</organism>
<protein>
    <recommendedName>
        <fullName evidence="5">Modulator of smoothened protein</fullName>
    </recommendedName>
    <alternativeName>
        <fullName evidence="1">Attenuator of hedgehog</fullName>
    </alternativeName>
</protein>